<protein>
    <recommendedName>
        <fullName>Proteasome subunit alpha type-6</fullName>
    </recommendedName>
    <alternativeName>
        <fullName>20S proteasome alpha subunit A</fullName>
    </alternativeName>
    <alternativeName>
        <fullName>20S proteasome subunit alpha-1</fullName>
    </alternativeName>
</protein>
<feature type="chain" id="PRO_0000124139" description="Proteasome subunit alpha type-6">
    <location>
        <begin position="1"/>
        <end position="246"/>
    </location>
</feature>
<evidence type="ECO:0000250" key="1"/>
<evidence type="ECO:0000255" key="2">
    <source>
        <dbReference type="PROSITE-ProRule" id="PRU00808"/>
    </source>
</evidence>
<name>PSA6_TOBAC</name>
<sequence>MSRGSGGGYDRHITIFSPEGRLFQVEYAFKAVKAAGITSIGVRGKDSVCVVTQKKVPDKLLDQTSVSHLFPITKYLGLLATGMTADARTLVQQARNEAAEFRFKYGYEMPVDVLSKWIADKSQVYTQHAYMRPLGVVAMILGIDEEKGPQLFKCDPAGHFFGHKATSAGSKEQEAINFLEKKMKNDPAFSYEETVQTAISALQSVLQEDFKASEIEVGVVKKEDPIFRVLTTEEIDEHLTAISERD</sequence>
<dbReference type="EMBL" id="Y16644">
    <property type="protein sequence ID" value="CAB39975.1"/>
    <property type="molecule type" value="mRNA"/>
</dbReference>
<dbReference type="RefSeq" id="NP_001312884.1">
    <property type="nucleotide sequence ID" value="NM_001325955.1"/>
</dbReference>
<dbReference type="SMR" id="Q9XG77"/>
<dbReference type="STRING" id="4097.Q9XG77"/>
<dbReference type="MEROPS" id="T01.971"/>
<dbReference type="PaxDb" id="4097-Q9XG77"/>
<dbReference type="ProMEX" id="Q9XG77"/>
<dbReference type="GeneID" id="107815705"/>
<dbReference type="KEGG" id="nta:107815705"/>
<dbReference type="OMA" id="WTYEQII"/>
<dbReference type="OrthoDB" id="431557at2759"/>
<dbReference type="PhylomeDB" id="Q9XG77"/>
<dbReference type="Proteomes" id="UP000084051">
    <property type="component" value="Unplaced"/>
</dbReference>
<dbReference type="GO" id="GO:0005737">
    <property type="term" value="C:cytoplasm"/>
    <property type="evidence" value="ECO:0007669"/>
    <property type="project" value="UniProtKB-SubCell"/>
</dbReference>
<dbReference type="GO" id="GO:0005634">
    <property type="term" value="C:nucleus"/>
    <property type="evidence" value="ECO:0000318"/>
    <property type="project" value="GO_Central"/>
</dbReference>
<dbReference type="GO" id="GO:0019773">
    <property type="term" value="C:proteasome core complex, alpha-subunit complex"/>
    <property type="evidence" value="ECO:0000250"/>
    <property type="project" value="UniProtKB"/>
</dbReference>
<dbReference type="GO" id="GO:0043161">
    <property type="term" value="P:proteasome-mediated ubiquitin-dependent protein catabolic process"/>
    <property type="evidence" value="ECO:0000318"/>
    <property type="project" value="GO_Central"/>
</dbReference>
<dbReference type="CDD" id="cd03754">
    <property type="entry name" value="proteasome_alpha_type_6"/>
    <property type="match status" value="1"/>
</dbReference>
<dbReference type="FunFam" id="3.60.20.10:FF:000036">
    <property type="entry name" value="Proteasome subunit alpha type"/>
    <property type="match status" value="1"/>
</dbReference>
<dbReference type="Gene3D" id="3.60.20.10">
    <property type="entry name" value="Glutamine Phosphoribosylpyrophosphate, subunit 1, domain 1"/>
    <property type="match status" value="1"/>
</dbReference>
<dbReference type="InterPro" id="IPR029055">
    <property type="entry name" value="Ntn_hydrolases_N"/>
</dbReference>
<dbReference type="InterPro" id="IPR050115">
    <property type="entry name" value="Proteasome_alpha"/>
</dbReference>
<dbReference type="InterPro" id="IPR023332">
    <property type="entry name" value="Proteasome_alpha-type"/>
</dbReference>
<dbReference type="InterPro" id="IPR000426">
    <property type="entry name" value="Proteasome_asu_N"/>
</dbReference>
<dbReference type="InterPro" id="IPR001353">
    <property type="entry name" value="Proteasome_sua/b"/>
</dbReference>
<dbReference type="InterPro" id="IPR034642">
    <property type="entry name" value="Proteasome_subunit_alpha6"/>
</dbReference>
<dbReference type="NCBIfam" id="NF003075">
    <property type="entry name" value="PRK03996.1"/>
    <property type="match status" value="1"/>
</dbReference>
<dbReference type="PANTHER" id="PTHR11599">
    <property type="entry name" value="PROTEASOME SUBUNIT ALPHA/BETA"/>
    <property type="match status" value="1"/>
</dbReference>
<dbReference type="Pfam" id="PF00227">
    <property type="entry name" value="Proteasome"/>
    <property type="match status" value="1"/>
</dbReference>
<dbReference type="Pfam" id="PF10584">
    <property type="entry name" value="Proteasome_A_N"/>
    <property type="match status" value="1"/>
</dbReference>
<dbReference type="SMART" id="SM00948">
    <property type="entry name" value="Proteasome_A_N"/>
    <property type="match status" value="1"/>
</dbReference>
<dbReference type="SUPFAM" id="SSF56235">
    <property type="entry name" value="N-terminal nucleophile aminohydrolases (Ntn hydrolases)"/>
    <property type="match status" value="1"/>
</dbReference>
<dbReference type="PROSITE" id="PS00388">
    <property type="entry name" value="PROTEASOME_ALPHA_1"/>
    <property type="match status" value="1"/>
</dbReference>
<dbReference type="PROSITE" id="PS51475">
    <property type="entry name" value="PROTEASOME_ALPHA_2"/>
    <property type="match status" value="1"/>
</dbReference>
<keyword id="KW-0963">Cytoplasm</keyword>
<keyword id="KW-0539">Nucleus</keyword>
<keyword id="KW-0647">Proteasome</keyword>
<keyword id="KW-1185">Reference proteome</keyword>
<organism>
    <name type="scientific">Nicotiana tabacum</name>
    <name type="common">Common tobacco</name>
    <dbReference type="NCBI Taxonomy" id="4097"/>
    <lineage>
        <taxon>Eukaryota</taxon>
        <taxon>Viridiplantae</taxon>
        <taxon>Streptophyta</taxon>
        <taxon>Embryophyta</taxon>
        <taxon>Tracheophyta</taxon>
        <taxon>Spermatophyta</taxon>
        <taxon>Magnoliopsida</taxon>
        <taxon>eudicotyledons</taxon>
        <taxon>Gunneridae</taxon>
        <taxon>Pentapetalae</taxon>
        <taxon>asterids</taxon>
        <taxon>lamiids</taxon>
        <taxon>Solanales</taxon>
        <taxon>Solanaceae</taxon>
        <taxon>Nicotianoideae</taxon>
        <taxon>Nicotianeae</taxon>
        <taxon>Nicotiana</taxon>
    </lineage>
</organism>
<reference key="1">
    <citation type="journal article" date="1999" name="Plant Mol. Biol.">
        <title>Expression of a proteasome alpha-type subunit gene during tobacco development and senescence.</title>
        <authorList>
            <person name="Bahrami A.R."/>
            <person name="Gray J.E."/>
        </authorList>
    </citation>
    <scope>NUCLEOTIDE SEQUENCE [MRNA]</scope>
    <source>
        <strain>cv. Wisconsin 38</strain>
        <tissue>Style</tissue>
    </source>
</reference>
<proteinExistence type="evidence at transcript level"/>
<gene>
    <name type="primary">PAA1</name>
    <name type="synonym">PSA1</name>
</gene>
<comment type="function">
    <text evidence="1">The proteasome is a multicatalytic proteinase complex which is characterized by its ability to cleave peptides with Arg, Phe, Tyr, Leu, and Glu adjacent to the leaving group at neutral or slightly basic pH. The proteasome has an ATP-dependent proteolytic activity (By similarity).</text>
</comment>
<comment type="subunit">
    <text evidence="1">The 26S proteasome consists of a 20S proteasome core and two 19S regulatory subunits. The 20S proteasome core is composed of 28 subunits that are arranged in four stacked rings, resulting in a barrel-shaped structure. The two end rings are each formed by seven alpha subunits, and the two central rings are each formed by seven beta subunits. The catalytic chamber with the active sites is on the inside of the barrel (By similarity).</text>
</comment>
<comment type="subcellular location">
    <subcellularLocation>
        <location evidence="1">Cytoplasm</location>
    </subcellularLocation>
    <subcellularLocation>
        <location evidence="1">Nucleus</location>
    </subcellularLocation>
</comment>
<comment type="similarity">
    <text evidence="2">Belongs to the peptidase T1A family.</text>
</comment>
<accession>Q9XG77</accession>